<name>MURA_LACAC</name>
<feature type="chain" id="PRO_0000231214" description="UDP-N-acetylglucosamine 1-carboxyvinyltransferase">
    <location>
        <begin position="1"/>
        <end position="431"/>
    </location>
</feature>
<feature type="active site" description="Proton donor" evidence="1">
    <location>
        <position position="116"/>
    </location>
</feature>
<feature type="binding site" evidence="1">
    <location>
        <begin position="22"/>
        <end position="23"/>
    </location>
    <ligand>
        <name>phosphoenolpyruvate</name>
        <dbReference type="ChEBI" id="CHEBI:58702"/>
    </ligand>
</feature>
<feature type="binding site" evidence="1">
    <location>
        <position position="92"/>
    </location>
    <ligand>
        <name>UDP-N-acetyl-alpha-D-glucosamine</name>
        <dbReference type="ChEBI" id="CHEBI:57705"/>
    </ligand>
</feature>
<feature type="binding site" evidence="1">
    <location>
        <begin position="121"/>
        <end position="125"/>
    </location>
    <ligand>
        <name>UDP-N-acetyl-alpha-D-glucosamine</name>
        <dbReference type="ChEBI" id="CHEBI:57705"/>
    </ligand>
</feature>
<feature type="binding site" evidence="1">
    <location>
        <position position="307"/>
    </location>
    <ligand>
        <name>UDP-N-acetyl-alpha-D-glucosamine</name>
        <dbReference type="ChEBI" id="CHEBI:57705"/>
    </ligand>
</feature>
<feature type="binding site" evidence="1">
    <location>
        <position position="330"/>
    </location>
    <ligand>
        <name>UDP-N-acetyl-alpha-D-glucosamine</name>
        <dbReference type="ChEBI" id="CHEBI:57705"/>
    </ligand>
</feature>
<keyword id="KW-0131">Cell cycle</keyword>
<keyword id="KW-0132">Cell division</keyword>
<keyword id="KW-0133">Cell shape</keyword>
<keyword id="KW-0961">Cell wall biogenesis/degradation</keyword>
<keyword id="KW-0963">Cytoplasm</keyword>
<keyword id="KW-0573">Peptidoglycan synthesis</keyword>
<keyword id="KW-1185">Reference proteome</keyword>
<keyword id="KW-0808">Transferase</keyword>
<accession>Q5FME5</accession>
<comment type="function">
    <text evidence="1">Cell wall formation. Adds enolpyruvyl to UDP-N-acetylglucosamine.</text>
</comment>
<comment type="catalytic activity">
    <reaction evidence="1">
        <text>phosphoenolpyruvate + UDP-N-acetyl-alpha-D-glucosamine = UDP-N-acetyl-3-O-(1-carboxyvinyl)-alpha-D-glucosamine + phosphate</text>
        <dbReference type="Rhea" id="RHEA:18681"/>
        <dbReference type="ChEBI" id="CHEBI:43474"/>
        <dbReference type="ChEBI" id="CHEBI:57705"/>
        <dbReference type="ChEBI" id="CHEBI:58702"/>
        <dbReference type="ChEBI" id="CHEBI:68483"/>
        <dbReference type="EC" id="2.5.1.7"/>
    </reaction>
</comment>
<comment type="pathway">
    <text evidence="1">Cell wall biogenesis; peptidoglycan biosynthesis.</text>
</comment>
<comment type="subcellular location">
    <subcellularLocation>
        <location evidence="1">Cytoplasm</location>
    </subcellularLocation>
</comment>
<comment type="similarity">
    <text evidence="1">Belongs to the EPSP synthase family. MurA subfamily.</text>
</comment>
<evidence type="ECO:0000255" key="1">
    <source>
        <dbReference type="HAMAP-Rule" id="MF_00111"/>
    </source>
</evidence>
<reference key="1">
    <citation type="journal article" date="2005" name="Proc. Natl. Acad. Sci. U.S.A.">
        <title>Complete genome sequence of the probiotic lactic acid bacterium Lactobacillus acidophilus NCFM.</title>
        <authorList>
            <person name="Altermann E."/>
            <person name="Russell W.M."/>
            <person name="Azcarate-Peril M.A."/>
            <person name="Barrangou R."/>
            <person name="Buck B.L."/>
            <person name="McAuliffe O."/>
            <person name="Souther N."/>
            <person name="Dobson A."/>
            <person name="Duong T."/>
            <person name="Callanan M."/>
            <person name="Lick S."/>
            <person name="Hamrick A."/>
            <person name="Cano R."/>
            <person name="Klaenhammer T.R."/>
        </authorList>
    </citation>
    <scope>NUCLEOTIDE SEQUENCE [LARGE SCALE GENOMIC DNA]</scope>
    <source>
        <strain>ATCC 700396 / NCK56 / N2 / NCFM</strain>
    </source>
</reference>
<dbReference type="EC" id="2.5.1.7" evidence="1"/>
<dbReference type="EMBL" id="CP000033">
    <property type="protein sequence ID" value="AAV42129.1"/>
    <property type="molecule type" value="Genomic_DNA"/>
</dbReference>
<dbReference type="RefSeq" id="WP_011254086.1">
    <property type="nucleotide sequence ID" value="NC_006814.3"/>
</dbReference>
<dbReference type="RefSeq" id="YP_193160.1">
    <property type="nucleotide sequence ID" value="NC_006814.3"/>
</dbReference>
<dbReference type="SMR" id="Q5FME5"/>
<dbReference type="STRING" id="272621.LBA0234"/>
<dbReference type="KEGG" id="lac:LBA0234"/>
<dbReference type="PATRIC" id="fig|272621.13.peg.224"/>
<dbReference type="eggNOG" id="COG0766">
    <property type="taxonomic scope" value="Bacteria"/>
</dbReference>
<dbReference type="HOGENOM" id="CLU_027387_0_0_9"/>
<dbReference type="OrthoDB" id="9803760at2"/>
<dbReference type="BioCyc" id="LACI272621:G1G49-228-MONOMER"/>
<dbReference type="UniPathway" id="UPA00219"/>
<dbReference type="Proteomes" id="UP000006381">
    <property type="component" value="Chromosome"/>
</dbReference>
<dbReference type="GO" id="GO:0005737">
    <property type="term" value="C:cytoplasm"/>
    <property type="evidence" value="ECO:0007669"/>
    <property type="project" value="UniProtKB-SubCell"/>
</dbReference>
<dbReference type="GO" id="GO:0008760">
    <property type="term" value="F:UDP-N-acetylglucosamine 1-carboxyvinyltransferase activity"/>
    <property type="evidence" value="ECO:0007669"/>
    <property type="project" value="UniProtKB-UniRule"/>
</dbReference>
<dbReference type="GO" id="GO:0051301">
    <property type="term" value="P:cell division"/>
    <property type="evidence" value="ECO:0007669"/>
    <property type="project" value="UniProtKB-KW"/>
</dbReference>
<dbReference type="GO" id="GO:0071555">
    <property type="term" value="P:cell wall organization"/>
    <property type="evidence" value="ECO:0007669"/>
    <property type="project" value="UniProtKB-KW"/>
</dbReference>
<dbReference type="GO" id="GO:0009252">
    <property type="term" value="P:peptidoglycan biosynthetic process"/>
    <property type="evidence" value="ECO:0007669"/>
    <property type="project" value="UniProtKB-UniRule"/>
</dbReference>
<dbReference type="GO" id="GO:0008360">
    <property type="term" value="P:regulation of cell shape"/>
    <property type="evidence" value="ECO:0007669"/>
    <property type="project" value="UniProtKB-KW"/>
</dbReference>
<dbReference type="GO" id="GO:0019277">
    <property type="term" value="P:UDP-N-acetylgalactosamine biosynthetic process"/>
    <property type="evidence" value="ECO:0007669"/>
    <property type="project" value="InterPro"/>
</dbReference>
<dbReference type="CDD" id="cd01555">
    <property type="entry name" value="UdpNAET"/>
    <property type="match status" value="1"/>
</dbReference>
<dbReference type="Gene3D" id="3.65.10.10">
    <property type="entry name" value="Enolpyruvate transferase domain"/>
    <property type="match status" value="2"/>
</dbReference>
<dbReference type="HAMAP" id="MF_00111">
    <property type="entry name" value="MurA"/>
    <property type="match status" value="1"/>
</dbReference>
<dbReference type="InterPro" id="IPR001986">
    <property type="entry name" value="Enolpyruvate_Tfrase_dom"/>
</dbReference>
<dbReference type="InterPro" id="IPR036968">
    <property type="entry name" value="Enolpyruvate_Tfrase_sf"/>
</dbReference>
<dbReference type="InterPro" id="IPR050068">
    <property type="entry name" value="MurA_subfamily"/>
</dbReference>
<dbReference type="InterPro" id="IPR013792">
    <property type="entry name" value="RNA3'P_cycl/enolpyr_Trfase_a/b"/>
</dbReference>
<dbReference type="InterPro" id="IPR005750">
    <property type="entry name" value="UDP_GlcNAc_COvinyl_MurA"/>
</dbReference>
<dbReference type="NCBIfam" id="TIGR01072">
    <property type="entry name" value="murA"/>
    <property type="match status" value="1"/>
</dbReference>
<dbReference type="NCBIfam" id="NF006873">
    <property type="entry name" value="PRK09369.1"/>
    <property type="match status" value="1"/>
</dbReference>
<dbReference type="NCBIfam" id="NF009470">
    <property type="entry name" value="PRK12830.1"/>
    <property type="match status" value="1"/>
</dbReference>
<dbReference type="PANTHER" id="PTHR43783">
    <property type="entry name" value="UDP-N-ACETYLGLUCOSAMINE 1-CARBOXYVINYLTRANSFERASE"/>
    <property type="match status" value="1"/>
</dbReference>
<dbReference type="PANTHER" id="PTHR43783:SF2">
    <property type="entry name" value="UDP-N-ACETYLGLUCOSAMINE 1-CARBOXYVINYLTRANSFERASE 2"/>
    <property type="match status" value="1"/>
</dbReference>
<dbReference type="Pfam" id="PF00275">
    <property type="entry name" value="EPSP_synthase"/>
    <property type="match status" value="1"/>
</dbReference>
<dbReference type="SUPFAM" id="SSF55205">
    <property type="entry name" value="EPT/RTPC-like"/>
    <property type="match status" value="1"/>
</dbReference>
<protein>
    <recommendedName>
        <fullName evidence="1">UDP-N-acetylglucosamine 1-carboxyvinyltransferase</fullName>
        <ecNumber evidence="1">2.5.1.7</ecNumber>
    </recommendedName>
    <alternativeName>
        <fullName evidence="1">Enoylpyruvate transferase</fullName>
    </alternativeName>
    <alternativeName>
        <fullName evidence="1">UDP-N-acetylglucosamine enolpyruvyl transferase</fullName>
        <shortName evidence="1">EPT</shortName>
    </alternativeName>
</protein>
<sequence>MKQMIIHGGKPLQGDVWIGGAKNSTVALIPASILSRTPVVLEGVPRIADVINLMDLLDEMDVRCEFKETTLRIDPTDIKMSPLPAGKIKSLRASYYFMGALLGRFGKAVVGFPGGDDIGPRPIDQHIKGFEALGASVKNENDQIIITAPEDGLHGAKIHLKMPSVGATMNIIMASVTAQGQTIIENAAKEPEIIDLATFLNNMGAVIRGAGTDVIRIEGVEMLKAQIPHTIIPDRIEAGTYVSLAACIGNGIRIHNIIEEHLDSYLAKVEEMGVVIDADEDSLYVYPAGDLKMVQVKTDVYPGFATDLQQPITPLLLTAKSGEGVVIDNIYPQRIGHIAQLQKMGANIKVADNIILAHPTEQLHGAEVIAGEIRAGACLMIAGLMAHGTTVIDKAGNILRGYDRIQEKLRQLGADVTIKDNPDVPGILDNI</sequence>
<gene>
    <name evidence="1" type="primary">murA</name>
    <name type="ordered locus">LBA0234</name>
</gene>
<proteinExistence type="inferred from homology"/>
<organism>
    <name type="scientific">Lactobacillus acidophilus (strain ATCC 700396 / NCK56 / N2 / NCFM)</name>
    <dbReference type="NCBI Taxonomy" id="272621"/>
    <lineage>
        <taxon>Bacteria</taxon>
        <taxon>Bacillati</taxon>
        <taxon>Bacillota</taxon>
        <taxon>Bacilli</taxon>
        <taxon>Lactobacillales</taxon>
        <taxon>Lactobacillaceae</taxon>
        <taxon>Lactobacillus</taxon>
    </lineage>
</organism>